<feature type="chain" id="PRO_0000431082" description="Nuclear pore complex protein NUP35">
    <location>
        <begin position="1"/>
        <end position="329"/>
    </location>
</feature>
<feature type="domain" description="RRM Nup35-type" evidence="1">
    <location>
        <begin position="183"/>
        <end position="264"/>
    </location>
</feature>
<feature type="region of interest" description="Disordered" evidence="2">
    <location>
        <begin position="48"/>
        <end position="105"/>
    </location>
</feature>
<feature type="region of interest" description="Disordered" evidence="2">
    <location>
        <begin position="123"/>
        <end position="167"/>
    </location>
</feature>
<feature type="region of interest" description="Disordered" evidence="2">
    <location>
        <begin position="271"/>
        <end position="315"/>
    </location>
</feature>
<feature type="compositionally biased region" description="Polar residues" evidence="2">
    <location>
        <begin position="123"/>
        <end position="139"/>
    </location>
</feature>
<feature type="compositionally biased region" description="Polar residues" evidence="2">
    <location>
        <begin position="282"/>
        <end position="306"/>
    </location>
</feature>
<feature type="sequence conflict" description="In Ref. 4; AAL49847." ref="4">
    <original>V</original>
    <variation>A</variation>
    <location>
        <position position="329"/>
    </location>
</feature>
<comment type="subunit">
    <text evidence="5">Part of the nuclear pore complex (NPC). The NPC has an eight-fold symmetrical structure comprising a central transport channel and two rings, the cytoplasmic and nuclear rings, to which eight filaments are attached. The cytoplasmic filaments have loose ends, while the nuclear filaments are joined in a distal ring, forming a nuclear basket. NPCs are highly dynamic in configuration and composition, and can be devided in 3 subcomplexes, the NUP62 subcomplex, the NUP107-160 subcomplex and the NUP93 subcomplex, containing approximately 30 different nucleoporin proteins.</text>
</comment>
<comment type="subcellular location">
    <subcellularLocation>
        <location evidence="5">Nucleus</location>
        <location evidence="5">Nuclear pore complex</location>
    </subcellularLocation>
</comment>
<comment type="similarity">
    <text evidence="4">Belongs to the Nup35 family.</text>
</comment>
<dbReference type="EMBL" id="AB023046">
    <property type="protein sequence ID" value="BAB01270.1"/>
    <property type="molecule type" value="Genomic_DNA"/>
</dbReference>
<dbReference type="EMBL" id="AC001645">
    <property type="protein sequence ID" value="AAB63646.1"/>
    <property type="molecule type" value="Genomic_DNA"/>
</dbReference>
<dbReference type="EMBL" id="CP002686">
    <property type="protein sequence ID" value="AEE75796.1"/>
    <property type="molecule type" value="Genomic_DNA"/>
</dbReference>
<dbReference type="EMBL" id="AY086937">
    <property type="protein sequence ID" value="AAM64501.1"/>
    <property type="molecule type" value="mRNA"/>
</dbReference>
<dbReference type="EMBL" id="BT002339">
    <property type="protein sequence ID" value="AAN86172.1"/>
    <property type="molecule type" value="mRNA"/>
</dbReference>
<dbReference type="EMBL" id="AY070444">
    <property type="protein sequence ID" value="AAL49847.1"/>
    <property type="molecule type" value="mRNA"/>
</dbReference>
<dbReference type="RefSeq" id="NP_566542.1">
    <property type="nucleotide sequence ID" value="NM_112502.5"/>
</dbReference>
<dbReference type="SMR" id="O04326"/>
<dbReference type="BioGRID" id="6212">
    <property type="interactions" value="63"/>
</dbReference>
<dbReference type="FunCoup" id="O04326">
    <property type="interactions" value="2889"/>
</dbReference>
<dbReference type="IntAct" id="O04326">
    <property type="interactions" value="72"/>
</dbReference>
<dbReference type="STRING" id="3702.O04326"/>
<dbReference type="iPTMnet" id="O04326"/>
<dbReference type="PaxDb" id="3702-AT3G16310.1"/>
<dbReference type="ProteomicsDB" id="248640"/>
<dbReference type="EnsemblPlants" id="AT3G16310.1">
    <property type="protein sequence ID" value="AT3G16310.1"/>
    <property type="gene ID" value="AT3G16310"/>
</dbReference>
<dbReference type="GeneID" id="820878"/>
<dbReference type="Gramene" id="AT3G16310.1">
    <property type="protein sequence ID" value="AT3G16310.1"/>
    <property type="gene ID" value="AT3G16310"/>
</dbReference>
<dbReference type="KEGG" id="ath:AT3G16310"/>
<dbReference type="Araport" id="AT3G16310"/>
<dbReference type="TAIR" id="AT3G16310"/>
<dbReference type="eggNOG" id="KOG4285">
    <property type="taxonomic scope" value="Eukaryota"/>
</dbReference>
<dbReference type="HOGENOM" id="CLU_042110_0_0_1"/>
<dbReference type="InParanoid" id="O04326"/>
<dbReference type="OMA" id="GPREANW"/>
<dbReference type="OrthoDB" id="1733656at2759"/>
<dbReference type="PhylomeDB" id="O04326"/>
<dbReference type="PRO" id="PR:O04326"/>
<dbReference type="Proteomes" id="UP000006548">
    <property type="component" value="Chromosome 3"/>
</dbReference>
<dbReference type="ExpressionAtlas" id="O04326">
    <property type="expression patterns" value="baseline and differential"/>
</dbReference>
<dbReference type="GO" id="GO:0031965">
    <property type="term" value="C:nuclear membrane"/>
    <property type="evidence" value="ECO:0007669"/>
    <property type="project" value="InterPro"/>
</dbReference>
<dbReference type="GO" id="GO:0005643">
    <property type="term" value="C:nuclear pore"/>
    <property type="evidence" value="ECO:0007669"/>
    <property type="project" value="UniProtKB-SubCell"/>
</dbReference>
<dbReference type="GO" id="GO:0003676">
    <property type="term" value="F:nucleic acid binding"/>
    <property type="evidence" value="ECO:0007669"/>
    <property type="project" value="InterPro"/>
</dbReference>
<dbReference type="GO" id="GO:0017056">
    <property type="term" value="F:structural constituent of nuclear pore"/>
    <property type="evidence" value="ECO:0007669"/>
    <property type="project" value="InterPro"/>
</dbReference>
<dbReference type="GO" id="GO:0051028">
    <property type="term" value="P:mRNA transport"/>
    <property type="evidence" value="ECO:0007669"/>
    <property type="project" value="UniProtKB-KW"/>
</dbReference>
<dbReference type="GO" id="GO:0015031">
    <property type="term" value="P:protein transport"/>
    <property type="evidence" value="ECO:0007669"/>
    <property type="project" value="UniProtKB-KW"/>
</dbReference>
<dbReference type="CDD" id="cd12441">
    <property type="entry name" value="RRM_Nup53_like"/>
    <property type="match status" value="1"/>
</dbReference>
<dbReference type="FunFam" id="3.30.70.330:FF:000095">
    <property type="entry name" value="Putative Nucleoporin NUP53"/>
    <property type="match status" value="1"/>
</dbReference>
<dbReference type="Gene3D" id="3.30.70.330">
    <property type="match status" value="1"/>
</dbReference>
<dbReference type="InterPro" id="IPR017389">
    <property type="entry name" value="Nucleoporin_NUP53"/>
</dbReference>
<dbReference type="InterPro" id="IPR012677">
    <property type="entry name" value="Nucleotide-bd_a/b_plait_sf"/>
</dbReference>
<dbReference type="InterPro" id="IPR035979">
    <property type="entry name" value="RBD_domain_sf"/>
</dbReference>
<dbReference type="InterPro" id="IPR007846">
    <property type="entry name" value="RRM_NUP35_dom"/>
</dbReference>
<dbReference type="PANTHER" id="PTHR21527">
    <property type="entry name" value="NUCLEOPORIN NUP35"/>
    <property type="match status" value="1"/>
</dbReference>
<dbReference type="PANTHER" id="PTHR21527:SF6">
    <property type="entry name" value="NUCLEOPORIN NUP35"/>
    <property type="match status" value="1"/>
</dbReference>
<dbReference type="Pfam" id="PF05172">
    <property type="entry name" value="RRM_Nup35"/>
    <property type="match status" value="1"/>
</dbReference>
<dbReference type="PIRSF" id="PIRSF038119">
    <property type="entry name" value="Nucleoporin_NUP53"/>
    <property type="match status" value="1"/>
</dbReference>
<dbReference type="SUPFAM" id="SSF54928">
    <property type="entry name" value="RNA-binding domain, RBD"/>
    <property type="match status" value="1"/>
</dbReference>
<dbReference type="PROSITE" id="PS51472">
    <property type="entry name" value="RRM_NUP35"/>
    <property type="match status" value="1"/>
</dbReference>
<reference key="1">
    <citation type="journal article" date="2000" name="DNA Res.">
        <title>Structural analysis of Arabidopsis thaliana chromosome 3. I. Sequence features of the regions of 4,504,864 bp covered by sixty P1 and TAC clones.</title>
        <authorList>
            <person name="Sato S."/>
            <person name="Nakamura Y."/>
            <person name="Kaneko T."/>
            <person name="Katoh T."/>
            <person name="Asamizu E."/>
            <person name="Tabata S."/>
        </authorList>
    </citation>
    <scope>NUCLEOTIDE SEQUENCE [LARGE SCALE GENOMIC DNA]</scope>
    <source>
        <strain>cv. Columbia</strain>
    </source>
</reference>
<reference key="2">
    <citation type="journal article" date="2000" name="Nature">
        <title>Sequence and analysis of chromosome 3 of the plant Arabidopsis thaliana.</title>
        <authorList>
            <person name="Salanoubat M."/>
            <person name="Lemcke K."/>
            <person name="Rieger M."/>
            <person name="Ansorge W."/>
            <person name="Unseld M."/>
            <person name="Fartmann B."/>
            <person name="Valle G."/>
            <person name="Bloecker H."/>
            <person name="Perez-Alonso M."/>
            <person name="Obermaier B."/>
            <person name="Delseny M."/>
            <person name="Boutry M."/>
            <person name="Grivell L.A."/>
            <person name="Mache R."/>
            <person name="Puigdomenech P."/>
            <person name="De Simone V."/>
            <person name="Choisne N."/>
            <person name="Artiguenave F."/>
            <person name="Robert C."/>
            <person name="Brottier P."/>
            <person name="Wincker P."/>
            <person name="Cattolico L."/>
            <person name="Weissenbach J."/>
            <person name="Saurin W."/>
            <person name="Quetier F."/>
            <person name="Schaefer M."/>
            <person name="Mueller-Auer S."/>
            <person name="Gabel C."/>
            <person name="Fuchs M."/>
            <person name="Benes V."/>
            <person name="Wurmbach E."/>
            <person name="Drzonek H."/>
            <person name="Erfle H."/>
            <person name="Jordan N."/>
            <person name="Bangert S."/>
            <person name="Wiedelmann R."/>
            <person name="Kranz H."/>
            <person name="Voss H."/>
            <person name="Holland R."/>
            <person name="Brandt P."/>
            <person name="Nyakatura G."/>
            <person name="Vezzi A."/>
            <person name="D'Angelo M."/>
            <person name="Pallavicini A."/>
            <person name="Toppo S."/>
            <person name="Simionati B."/>
            <person name="Conrad A."/>
            <person name="Hornischer K."/>
            <person name="Kauer G."/>
            <person name="Loehnert T.-H."/>
            <person name="Nordsiek G."/>
            <person name="Reichelt J."/>
            <person name="Scharfe M."/>
            <person name="Schoen O."/>
            <person name="Bargues M."/>
            <person name="Terol J."/>
            <person name="Climent J."/>
            <person name="Navarro P."/>
            <person name="Collado C."/>
            <person name="Perez-Perez A."/>
            <person name="Ottenwaelder B."/>
            <person name="Duchemin D."/>
            <person name="Cooke R."/>
            <person name="Laudie M."/>
            <person name="Berger-Llauro C."/>
            <person name="Purnelle B."/>
            <person name="Masuy D."/>
            <person name="de Haan M."/>
            <person name="Maarse A.C."/>
            <person name="Alcaraz J.-P."/>
            <person name="Cottet A."/>
            <person name="Casacuberta E."/>
            <person name="Monfort A."/>
            <person name="Argiriou A."/>
            <person name="Flores M."/>
            <person name="Liguori R."/>
            <person name="Vitale D."/>
            <person name="Mannhaupt G."/>
            <person name="Haase D."/>
            <person name="Schoof H."/>
            <person name="Rudd S."/>
            <person name="Zaccaria P."/>
            <person name="Mewes H.-W."/>
            <person name="Mayer K.F.X."/>
            <person name="Kaul S."/>
            <person name="Town C.D."/>
            <person name="Koo H.L."/>
            <person name="Tallon L.J."/>
            <person name="Jenkins J."/>
            <person name="Rooney T."/>
            <person name="Rizzo M."/>
            <person name="Walts A."/>
            <person name="Utterback T."/>
            <person name="Fujii C.Y."/>
            <person name="Shea T.P."/>
            <person name="Creasy T.H."/>
            <person name="Haas B."/>
            <person name="Maiti R."/>
            <person name="Wu D."/>
            <person name="Peterson J."/>
            <person name="Van Aken S."/>
            <person name="Pai G."/>
            <person name="Militscher J."/>
            <person name="Sellers P."/>
            <person name="Gill J.E."/>
            <person name="Feldblyum T.V."/>
            <person name="Preuss D."/>
            <person name="Lin X."/>
            <person name="Nierman W.C."/>
            <person name="Salzberg S.L."/>
            <person name="White O."/>
            <person name="Venter J.C."/>
            <person name="Fraser C.M."/>
            <person name="Kaneko T."/>
            <person name="Nakamura Y."/>
            <person name="Sato S."/>
            <person name="Kato T."/>
            <person name="Asamizu E."/>
            <person name="Sasamoto S."/>
            <person name="Kimura T."/>
            <person name="Idesawa K."/>
            <person name="Kawashima K."/>
            <person name="Kishida Y."/>
            <person name="Kiyokawa C."/>
            <person name="Kohara M."/>
            <person name="Matsumoto M."/>
            <person name="Matsuno A."/>
            <person name="Muraki A."/>
            <person name="Nakayama S."/>
            <person name="Nakazaki N."/>
            <person name="Shinpo S."/>
            <person name="Takeuchi C."/>
            <person name="Wada T."/>
            <person name="Watanabe A."/>
            <person name="Yamada M."/>
            <person name="Yasuda M."/>
            <person name="Tabata S."/>
        </authorList>
    </citation>
    <scope>NUCLEOTIDE SEQUENCE [LARGE SCALE GENOMIC DNA]</scope>
    <source>
        <strain>cv. Columbia</strain>
    </source>
</reference>
<reference key="3">
    <citation type="journal article" date="2017" name="Plant J.">
        <title>Araport11: a complete reannotation of the Arabidopsis thaliana reference genome.</title>
        <authorList>
            <person name="Cheng C.Y."/>
            <person name="Krishnakumar V."/>
            <person name="Chan A.P."/>
            <person name="Thibaud-Nissen F."/>
            <person name="Schobel S."/>
            <person name="Town C.D."/>
        </authorList>
    </citation>
    <scope>GENOME REANNOTATION</scope>
    <source>
        <strain>cv. Columbia</strain>
    </source>
</reference>
<reference key="4">
    <citation type="journal article" date="2003" name="Science">
        <title>Empirical analysis of transcriptional activity in the Arabidopsis genome.</title>
        <authorList>
            <person name="Yamada K."/>
            <person name="Lim J."/>
            <person name="Dale J.M."/>
            <person name="Chen H."/>
            <person name="Shinn P."/>
            <person name="Palm C.J."/>
            <person name="Southwick A.M."/>
            <person name="Wu H.C."/>
            <person name="Kim C.J."/>
            <person name="Nguyen M."/>
            <person name="Pham P.K."/>
            <person name="Cheuk R.F."/>
            <person name="Karlin-Newmann G."/>
            <person name="Liu S.X."/>
            <person name="Lam B."/>
            <person name="Sakano H."/>
            <person name="Wu T."/>
            <person name="Yu G."/>
            <person name="Miranda M."/>
            <person name="Quach H.L."/>
            <person name="Tripp M."/>
            <person name="Chang C.H."/>
            <person name="Lee J.M."/>
            <person name="Toriumi M.J."/>
            <person name="Chan M.M."/>
            <person name="Tang C.C."/>
            <person name="Onodera C.S."/>
            <person name="Deng J.M."/>
            <person name="Akiyama K."/>
            <person name="Ansari Y."/>
            <person name="Arakawa T."/>
            <person name="Banh J."/>
            <person name="Banno F."/>
            <person name="Bowser L."/>
            <person name="Brooks S.Y."/>
            <person name="Carninci P."/>
            <person name="Chao Q."/>
            <person name="Choy N."/>
            <person name="Enju A."/>
            <person name="Goldsmith A.D."/>
            <person name="Gurjal M."/>
            <person name="Hansen N.F."/>
            <person name="Hayashizaki Y."/>
            <person name="Johnson-Hopson C."/>
            <person name="Hsuan V.W."/>
            <person name="Iida K."/>
            <person name="Karnes M."/>
            <person name="Khan S."/>
            <person name="Koesema E."/>
            <person name="Ishida J."/>
            <person name="Jiang P.X."/>
            <person name="Jones T."/>
            <person name="Kawai J."/>
            <person name="Kamiya A."/>
            <person name="Meyers C."/>
            <person name="Nakajima M."/>
            <person name="Narusaka M."/>
            <person name="Seki M."/>
            <person name="Sakurai T."/>
            <person name="Satou M."/>
            <person name="Tamse R."/>
            <person name="Vaysberg M."/>
            <person name="Wallender E.K."/>
            <person name="Wong C."/>
            <person name="Yamamura Y."/>
            <person name="Yuan S."/>
            <person name="Shinozaki K."/>
            <person name="Davis R.W."/>
            <person name="Theologis A."/>
            <person name="Ecker J.R."/>
        </authorList>
    </citation>
    <scope>NUCLEOTIDE SEQUENCE [LARGE SCALE MRNA]</scope>
    <source>
        <strain>cv. Columbia</strain>
    </source>
</reference>
<reference key="5">
    <citation type="submission" date="2002-03" db="EMBL/GenBank/DDBJ databases">
        <title>Full-length cDNA from Arabidopsis thaliana.</title>
        <authorList>
            <person name="Brover V.V."/>
            <person name="Troukhan M.E."/>
            <person name="Alexandrov N.A."/>
            <person name="Lu Y.-P."/>
            <person name="Flavell R.B."/>
            <person name="Feldmann K.A."/>
        </authorList>
    </citation>
    <scope>NUCLEOTIDE SEQUENCE [LARGE SCALE MRNA]</scope>
</reference>
<reference key="6">
    <citation type="journal article" date="2009" name="J. Proteomics">
        <title>Phosphoproteomic analysis of nuclei-enriched fractions from Arabidopsis thaliana.</title>
        <authorList>
            <person name="Jones A.M.E."/>
            <person name="MacLean D."/>
            <person name="Studholme D.J."/>
            <person name="Serna-Sanz A."/>
            <person name="Andreasson E."/>
            <person name="Rathjen J.P."/>
            <person name="Peck S.C."/>
        </authorList>
    </citation>
    <scope>IDENTIFICATION BY MASS SPECTROMETRY [LARGE SCALE ANALYSIS]</scope>
    <source>
        <strain>cv. Columbia</strain>
    </source>
</reference>
<reference key="7">
    <citation type="journal article" date="2009" name="Plant Physiol.">
        <title>Large-scale Arabidopsis phosphoproteome profiling reveals novel chloroplast kinase substrates and phosphorylation networks.</title>
        <authorList>
            <person name="Reiland S."/>
            <person name="Messerli G."/>
            <person name="Baerenfaller K."/>
            <person name="Gerrits B."/>
            <person name="Endler A."/>
            <person name="Grossmann J."/>
            <person name="Gruissem W."/>
            <person name="Baginsky S."/>
        </authorList>
    </citation>
    <scope>IDENTIFICATION BY MASS SPECTROMETRY [LARGE SCALE ANALYSIS]</scope>
</reference>
<reference key="8">
    <citation type="journal article" date="2010" name="Plant Cell">
        <title>Identification and characterization of nuclear pore complex components in Arabidopsis thaliana.</title>
        <authorList>
            <person name="Tamura K."/>
            <person name="Fukao Y."/>
            <person name="Iwamoto M."/>
            <person name="Haraguchi T."/>
            <person name="Hara-Nishimura I."/>
        </authorList>
    </citation>
    <scope>IDENTIFICATION IN THE NUCLEAR PORE COMPLEX</scope>
    <scope>NOMENCLATURE</scope>
</reference>
<keyword id="KW-0509">mRNA transport</keyword>
<keyword id="KW-0906">Nuclear pore complex</keyword>
<keyword id="KW-0539">Nucleus</keyword>
<keyword id="KW-0653">Protein transport</keyword>
<keyword id="KW-1185">Reference proteome</keyword>
<keyword id="KW-0811">Translocation</keyword>
<keyword id="KW-0813">Transport</keyword>
<gene>
    <name evidence="3" type="primary">NUP35</name>
    <name evidence="6" type="ordered locus">At3g16310</name>
    <name evidence="7" type="ORF">T02O04.20</name>
</gene>
<organism evidence="8">
    <name type="scientific">Arabidopsis thaliana</name>
    <name type="common">Mouse-ear cress</name>
    <dbReference type="NCBI Taxonomy" id="3702"/>
    <lineage>
        <taxon>Eukaryota</taxon>
        <taxon>Viridiplantae</taxon>
        <taxon>Streptophyta</taxon>
        <taxon>Embryophyta</taxon>
        <taxon>Tracheophyta</taxon>
        <taxon>Spermatophyta</taxon>
        <taxon>Magnoliopsida</taxon>
        <taxon>eudicotyledons</taxon>
        <taxon>Gunneridae</taxon>
        <taxon>Pentapetalae</taxon>
        <taxon>rosids</taxon>
        <taxon>malvids</taxon>
        <taxon>Brassicales</taxon>
        <taxon>Brassicaceae</taxon>
        <taxon>Camelineae</taxon>
        <taxon>Arabidopsis</taxon>
    </lineage>
</organism>
<evidence type="ECO:0000255" key="1">
    <source>
        <dbReference type="PROSITE-ProRule" id="PRU00804"/>
    </source>
</evidence>
<evidence type="ECO:0000256" key="2">
    <source>
        <dbReference type="SAM" id="MobiDB-lite"/>
    </source>
</evidence>
<evidence type="ECO:0000303" key="3">
    <source>
    </source>
</evidence>
<evidence type="ECO:0000305" key="4"/>
<evidence type="ECO:0000305" key="5">
    <source>
    </source>
</evidence>
<evidence type="ECO:0000312" key="6">
    <source>
        <dbReference type="Araport" id="AT3G16310"/>
    </source>
</evidence>
<evidence type="ECO:0000312" key="7">
    <source>
        <dbReference type="EMBL" id="AAB63646.1"/>
    </source>
</evidence>
<evidence type="ECO:0000312" key="8">
    <source>
        <dbReference type="Proteomes" id="UP000006548"/>
    </source>
</evidence>
<accession>O04326</accession>
<accession>Q8VYL9</accession>
<sequence>MSAAAHRTPKSGRQSLLFQDLASPVSARRGKFSSPGQAAAVSALWRENFGGSDLPPPPMYTLDDRSDFSPESGIADYSASPDAKSDRRTPFQSSGKNIVTPGKGKLEASPSFSLLNAQQSQQVSGSPSWWSQSKAGSSTEQDDKGKGSPVEGVVQPGALVTLPPPREVARPEVQRQIIPTGNLDEEEWVTVYGFSPGDTNLVLREFEKCGMVLKHVPGPRNANWMHILYQNRSDAHKALNKAGMMINGVVIVGVKPVDPIQKQALNERLNNQGFMPLPPPSSTRNTARPLSRPQYLQNGSAFSPQPSGGAMASPSKSMVSKFFDLMFGV</sequence>
<protein>
    <recommendedName>
        <fullName evidence="3">Nuclear pore complex protein NUP35</fullName>
    </recommendedName>
    <alternativeName>
        <fullName>Nucleoporin 35</fullName>
    </alternativeName>
</protein>
<proteinExistence type="evidence at protein level"/>
<name>NUP35_ARATH</name>